<protein>
    <recommendedName>
        <fullName evidence="7">Non-reducing polyketide synthase crz7</fullName>
        <shortName evidence="7">NR-PKS crz7</shortName>
        <ecNumber evidence="6">2.3.1.-</ecNumber>
    </recommendedName>
    <alternativeName>
        <fullName evidence="7">Cristazarin biosynthesis cluster protein 7</fullName>
    </alternativeName>
</protein>
<sequence length="2098" mass="228009">MTLPNNVILFGDQTVDPCPIIKQLYRQSRDFLTLEALFRQSYDAVRREIATLEYSDRALFPAFNSIQGLAERQAERHNEAVSTVLHCIAQLGLLLIYADQDDSLFNASPSRTYLVGLCTGMLPAAALAASSSTSQLLRLAPDVVLVALRLGLEANRRSAQIEASTESWASVVPGMAPQEQQAALAQFNDEFMIPTSKQAYISAESDSTATISGPPSTLVSLFSSSDSFRKARRIKLPITAAFHAPHLRLPDVEKIIGSLSHSDEYPLRNDVVIVSTRSGKPITAQSLGDALQHIILDILQEPMRWSSVVDEMINNLKDQRTILTSAGPVRAADSLRQRLASAGIEVLKSTEMQPQGEQPTKPRSSDIAIIGFAARLPESETLEEAWKLLEDGRDIPSDRFDVNTHCDPSGKIKNTSHTPYGCFLDRPGFFDARLFNMSPREASQTDPAQRLLLLTTYEALEMAGYTPDGTPSTAGDRIGTFFGQTLDDYREANASQNIEMYYVSGGIRAFGPGRLNFHFKWEGPSYCVDAACSSSTLSIQMAMSSLRAHECDTAVAGGTNVLTGVDMFSGLSRGSFLSPTGSCKTFDNDADGYCRGDGVGSVILKRLDDAIADGDNIQAVIKSAATNHSAHAVSITHPHAGAQQNLMRQVLRDADVEPSDIDYVEMHGTGTQAGDATEFASVTNVISGRTRDNPLHVGAVKANIGHAEAAAGTNSLVKVLMMMRKNAIPPHVGIKGRINESFPPLDKINVRINRTMTPFVARAGGDGKRRVLLNNFNATGGNTSLLLEDAPKTEIRGHDPRSAHVIAISAKTSYSFRQNTQRLLEYLQQNPETQLQDLAYTTTARRMHHAIRKAYAVQSTEQLVQSLKKDISNSPEIGATTEHTSAIFLFTGQGSQYLGMGRQLFQTNTSFRKSISDSDSICTRQGLPSFEWIVSAEPSDDRVPTPSETQLALVAIALALAALWQSWGITPKAVIGHSLGEYAALCVAGVLSVSDTLYLVGKRAEMMEKKCVANTHAMLAIQSDSESIQQLISGGQMPSCEIACFNGPSNTVVSGSLKDIHSLEVKLSAMGTKTTLLKLPFAFHSVQMDPILEDIRALAQNVQFRKPIVPIASTLLGTLVKDHGIITADYLARQARQAVKFQEALQACKAENIASEDTLWIEVGPHPLCHGMVRSTLGLSPTKALPTLKRDEDCWSTISRSIANAYNSGVKVSWIDYHRDFQGALKLLELPSYAFDLKNYWIQHEGDWSLRKGETTRTTAPPPQASFSTTCLQGVENETFTQDSASVTFSSQLSEPKLNAAVRGHLVSGIGLCPSSVYADVAFTAAWYIASRMTPSDPVPAMDLSTMEVFRPLVVNSNETSQLLKVSASRNSNEQVVNIKISSQDSKGRQEHAHCTVMYGDGQQWMDEWQRNAYLFESRIAKLTQPSSPGIHRMLKEMIYKQFQTVVTYSPEYHNIDEIFMDCDLNETAANIKLQSMAGSGEFIYSPYWIDTIAHLAGFILNANVKTPTDTVFISHGWQSFRIAAPLSAEKAYRGYVRMQPSNGRGVMAGDVYIFDGEDIVVVCKGIKFQQMKRTTLQSLLGVSTAATSISKPVAAKETRPHPVVVRKAAVTQSPSAGFSKVLDTIASEVGVDVSELSDDVKISDVGVDSLLTISILGRLRPETGLDLSSSLFIEHPTIAELRAFFLDKMDEPQATANDDDSDDSSEDEDPGYSRSQSNSTISTPEEPDVVSILMSIVAREVGVEESEIQLSTPFAEIGVDSLLTISILDAFKTEIGVNLSANFFHDHPTFADVQKALGPTSTPQKSLDLPLRSLEQSSKASSQTLRAKSVLLQGRPEKGKPALFLLPDGAGSLFSYISMPSLPSGLPVYGLDSPFHNDPSEYTISFSAVAAIYIAAIRAIQPKGPYMLGGWSLGGIHAYETARQLIEQGETISNLIMIDSPCPGTLPPLPAPTLSLLEKAGIFDGLSTSGAPITERTRLHFLGCVRALENYTAVPLPVGKSPGKVTVIWAQEGVLEGREEQGKEYMAATSSGDLNKDMDKAKEWLTGRRTSFGPSGWDKLTGTEVHCHVVSGNHFSIMFPPKIAAVAKAVATGLPEK</sequence>
<feature type="chain" id="PRO_0000460586" description="Non-reducing polyketide synthase crz7">
    <location>
        <begin position="1"/>
        <end position="2098"/>
    </location>
</feature>
<feature type="domain" description="Starter acyltransferase (SAT)" evidence="1">
    <location>
        <begin position="8"/>
        <end position="243"/>
    </location>
</feature>
<feature type="domain" description="Ketosynthase family 3 (KS3)" evidence="3">
    <location>
        <begin position="364"/>
        <end position="789"/>
    </location>
</feature>
<feature type="domain" description="Malonyl-CoA:ACP transacylase (MAT)" evidence="1">
    <location>
        <begin position="887"/>
        <end position="1211"/>
    </location>
</feature>
<feature type="domain" description="PKS/mFAS DH" evidence="4">
    <location>
        <begin position="1270"/>
        <end position="1578"/>
    </location>
</feature>
<feature type="domain" description="Carrier 1" evidence="2">
    <location>
        <begin position="1613"/>
        <end position="1690"/>
    </location>
</feature>
<feature type="domain" description="Carrier 2" evidence="2">
    <location>
        <begin position="1725"/>
        <end position="1802"/>
    </location>
</feature>
<feature type="region of interest" description="N-terminal hotdog fold" evidence="4">
    <location>
        <begin position="1270"/>
        <end position="1404"/>
    </location>
</feature>
<feature type="region of interest" description="C-terminal hotdog fold" evidence="4">
    <location>
        <begin position="1431"/>
        <end position="1578"/>
    </location>
</feature>
<feature type="region of interest" description="Disordered" evidence="5">
    <location>
        <begin position="1693"/>
        <end position="1725"/>
    </location>
</feature>
<feature type="region of interest" description="Thioesterase (TE) domain" evidence="1">
    <location>
        <begin position="1844"/>
        <end position="2080"/>
    </location>
</feature>
<feature type="compositionally biased region" description="Acidic residues" evidence="5">
    <location>
        <begin position="1698"/>
        <end position="1711"/>
    </location>
</feature>
<feature type="compositionally biased region" description="Polar residues" evidence="5">
    <location>
        <begin position="1714"/>
        <end position="1724"/>
    </location>
</feature>
<feature type="active site" description="For beta-ketoacyl synthase activity" evidence="3">
    <location>
        <position position="532"/>
    </location>
</feature>
<feature type="active site" description="For beta-ketoacyl synthase activity" evidence="3">
    <location>
        <position position="667"/>
    </location>
</feature>
<feature type="active site" description="For beta-ketoacyl synthase activity" evidence="3">
    <location>
        <position position="706"/>
    </location>
</feature>
<feature type="active site" description="Proton acceptor; for dehydratase activity" evidence="4">
    <location>
        <position position="1305"/>
    </location>
</feature>
<feature type="active site" description="Proton donor; for dehydratase activity" evidence="4">
    <location>
        <position position="1491"/>
    </location>
</feature>
<feature type="modified residue" description="O-(pantetheine 4'-phosphoryl)serine" evidence="2">
    <location>
        <position position="1650"/>
    </location>
</feature>
<feature type="modified residue" description="O-(pantetheine 4'-phosphoryl)serine" evidence="2">
    <location>
        <position position="1762"/>
    </location>
</feature>
<dbReference type="EC" id="2.3.1.-" evidence="6"/>
<dbReference type="EMBL" id="MN317157">
    <property type="protein sequence ID" value="QIX11491.1"/>
    <property type="molecule type" value="Genomic_DNA"/>
</dbReference>
<dbReference type="SMR" id="A0A6H0YV38"/>
<dbReference type="GO" id="GO:0004315">
    <property type="term" value="F:3-oxoacyl-[acyl-carrier-protein] synthase activity"/>
    <property type="evidence" value="ECO:0007669"/>
    <property type="project" value="InterPro"/>
</dbReference>
<dbReference type="GO" id="GO:0004312">
    <property type="term" value="F:fatty acid synthase activity"/>
    <property type="evidence" value="ECO:0007669"/>
    <property type="project" value="TreeGrafter"/>
</dbReference>
<dbReference type="GO" id="GO:0031177">
    <property type="term" value="F:phosphopantetheine binding"/>
    <property type="evidence" value="ECO:0007669"/>
    <property type="project" value="InterPro"/>
</dbReference>
<dbReference type="GO" id="GO:0006633">
    <property type="term" value="P:fatty acid biosynthetic process"/>
    <property type="evidence" value="ECO:0007669"/>
    <property type="project" value="InterPro"/>
</dbReference>
<dbReference type="GO" id="GO:0030639">
    <property type="term" value="P:polyketide biosynthetic process"/>
    <property type="evidence" value="ECO:0007669"/>
    <property type="project" value="UniProtKB-ARBA"/>
</dbReference>
<dbReference type="GO" id="GO:0009403">
    <property type="term" value="P:toxin biosynthetic process"/>
    <property type="evidence" value="ECO:0007669"/>
    <property type="project" value="UniProtKB-ARBA"/>
</dbReference>
<dbReference type="CDD" id="cd00833">
    <property type="entry name" value="PKS"/>
    <property type="match status" value="1"/>
</dbReference>
<dbReference type="FunFam" id="3.40.366.10:FF:000002">
    <property type="entry name" value="Probable polyketide synthase 2"/>
    <property type="match status" value="1"/>
</dbReference>
<dbReference type="FunFam" id="1.10.1200.10:FF:000011">
    <property type="entry name" value="Sterigmatocystin biosynthesis polyketide synthase"/>
    <property type="match status" value="1"/>
</dbReference>
<dbReference type="FunFam" id="3.10.129.110:FF:000001">
    <property type="entry name" value="Sterigmatocystin biosynthesis polyketide synthase"/>
    <property type="match status" value="1"/>
</dbReference>
<dbReference type="Gene3D" id="3.30.70.3290">
    <property type="match status" value="1"/>
</dbReference>
<dbReference type="Gene3D" id="3.40.47.10">
    <property type="match status" value="1"/>
</dbReference>
<dbReference type="Gene3D" id="1.10.1200.10">
    <property type="entry name" value="ACP-like"/>
    <property type="match status" value="2"/>
</dbReference>
<dbReference type="Gene3D" id="3.40.50.1820">
    <property type="entry name" value="alpha/beta hydrolase"/>
    <property type="match status" value="1"/>
</dbReference>
<dbReference type="Gene3D" id="3.30.70.250">
    <property type="entry name" value="Malonyl-CoA ACP transacylase, ACP-binding"/>
    <property type="match status" value="1"/>
</dbReference>
<dbReference type="Gene3D" id="3.40.366.10">
    <property type="entry name" value="Malonyl-Coenzyme A Acyl Carrier Protein, domain 2"/>
    <property type="match status" value="2"/>
</dbReference>
<dbReference type="Gene3D" id="3.10.129.110">
    <property type="entry name" value="Polyketide synthase dehydratase"/>
    <property type="match status" value="1"/>
</dbReference>
<dbReference type="InterPro" id="IPR029058">
    <property type="entry name" value="AB_hydrolase_fold"/>
</dbReference>
<dbReference type="InterPro" id="IPR001227">
    <property type="entry name" value="Ac_transferase_dom_sf"/>
</dbReference>
<dbReference type="InterPro" id="IPR036736">
    <property type="entry name" value="ACP-like_sf"/>
</dbReference>
<dbReference type="InterPro" id="IPR014043">
    <property type="entry name" value="Acyl_transferase_dom"/>
</dbReference>
<dbReference type="InterPro" id="IPR016035">
    <property type="entry name" value="Acyl_Trfase/lysoPLipase"/>
</dbReference>
<dbReference type="InterPro" id="IPR018201">
    <property type="entry name" value="Ketoacyl_synth_AS"/>
</dbReference>
<dbReference type="InterPro" id="IPR014031">
    <property type="entry name" value="Ketoacyl_synth_C"/>
</dbReference>
<dbReference type="InterPro" id="IPR014030">
    <property type="entry name" value="Ketoacyl_synth_N"/>
</dbReference>
<dbReference type="InterPro" id="IPR016036">
    <property type="entry name" value="Malonyl_transacylase_ACP-bd"/>
</dbReference>
<dbReference type="InterPro" id="IPR020841">
    <property type="entry name" value="PKS_Beta-ketoAc_synthase_dom"/>
</dbReference>
<dbReference type="InterPro" id="IPR042104">
    <property type="entry name" value="PKS_dehydratase_sf"/>
</dbReference>
<dbReference type="InterPro" id="IPR049551">
    <property type="entry name" value="PKS_DH_C"/>
</dbReference>
<dbReference type="InterPro" id="IPR049900">
    <property type="entry name" value="PKS_mFAS_DH"/>
</dbReference>
<dbReference type="InterPro" id="IPR050091">
    <property type="entry name" value="PKS_NRPS_Biosynth_Enz"/>
</dbReference>
<dbReference type="InterPro" id="IPR020806">
    <property type="entry name" value="PKS_PP-bd"/>
</dbReference>
<dbReference type="InterPro" id="IPR009081">
    <property type="entry name" value="PP-bd_ACP"/>
</dbReference>
<dbReference type="InterPro" id="IPR030918">
    <property type="entry name" value="PT_fungal_PKS"/>
</dbReference>
<dbReference type="InterPro" id="IPR032088">
    <property type="entry name" value="SAT"/>
</dbReference>
<dbReference type="InterPro" id="IPR001031">
    <property type="entry name" value="Thioesterase"/>
</dbReference>
<dbReference type="InterPro" id="IPR016039">
    <property type="entry name" value="Thiolase-like"/>
</dbReference>
<dbReference type="NCBIfam" id="TIGR04532">
    <property type="entry name" value="PT_fungal_PKS"/>
    <property type="match status" value="1"/>
</dbReference>
<dbReference type="PANTHER" id="PTHR43775">
    <property type="entry name" value="FATTY ACID SYNTHASE"/>
    <property type="match status" value="1"/>
</dbReference>
<dbReference type="PANTHER" id="PTHR43775:SF37">
    <property type="entry name" value="SI:DKEY-61P9.11"/>
    <property type="match status" value="1"/>
</dbReference>
<dbReference type="Pfam" id="PF00698">
    <property type="entry name" value="Acyl_transf_1"/>
    <property type="match status" value="1"/>
</dbReference>
<dbReference type="Pfam" id="PF22621">
    <property type="entry name" value="CurL-like_PKS_C"/>
    <property type="match status" value="1"/>
</dbReference>
<dbReference type="Pfam" id="PF00109">
    <property type="entry name" value="ketoacyl-synt"/>
    <property type="match status" value="1"/>
</dbReference>
<dbReference type="Pfam" id="PF02801">
    <property type="entry name" value="Ketoacyl-synt_C"/>
    <property type="match status" value="1"/>
</dbReference>
<dbReference type="Pfam" id="PF00550">
    <property type="entry name" value="PP-binding"/>
    <property type="match status" value="2"/>
</dbReference>
<dbReference type="Pfam" id="PF14765">
    <property type="entry name" value="PS-DH"/>
    <property type="match status" value="1"/>
</dbReference>
<dbReference type="Pfam" id="PF16073">
    <property type="entry name" value="SAT"/>
    <property type="match status" value="1"/>
</dbReference>
<dbReference type="Pfam" id="PF00975">
    <property type="entry name" value="Thioesterase"/>
    <property type="match status" value="1"/>
</dbReference>
<dbReference type="SMART" id="SM00827">
    <property type="entry name" value="PKS_AT"/>
    <property type="match status" value="1"/>
</dbReference>
<dbReference type="SMART" id="SM00825">
    <property type="entry name" value="PKS_KS"/>
    <property type="match status" value="1"/>
</dbReference>
<dbReference type="SMART" id="SM00823">
    <property type="entry name" value="PKS_PP"/>
    <property type="match status" value="2"/>
</dbReference>
<dbReference type="SUPFAM" id="SSF47336">
    <property type="entry name" value="ACP-like"/>
    <property type="match status" value="2"/>
</dbReference>
<dbReference type="SUPFAM" id="SSF53474">
    <property type="entry name" value="alpha/beta-Hydrolases"/>
    <property type="match status" value="1"/>
</dbReference>
<dbReference type="SUPFAM" id="SSF52151">
    <property type="entry name" value="FabD/lysophospholipase-like"/>
    <property type="match status" value="1"/>
</dbReference>
<dbReference type="SUPFAM" id="SSF55048">
    <property type="entry name" value="Probable ACP-binding domain of malonyl-CoA ACP transacylase"/>
    <property type="match status" value="1"/>
</dbReference>
<dbReference type="SUPFAM" id="SSF53901">
    <property type="entry name" value="Thiolase-like"/>
    <property type="match status" value="1"/>
</dbReference>
<dbReference type="PROSITE" id="PS50075">
    <property type="entry name" value="CARRIER"/>
    <property type="match status" value="2"/>
</dbReference>
<dbReference type="PROSITE" id="PS00606">
    <property type="entry name" value="KS3_1"/>
    <property type="match status" value="1"/>
</dbReference>
<dbReference type="PROSITE" id="PS52004">
    <property type="entry name" value="KS3_2"/>
    <property type="match status" value="1"/>
</dbReference>
<dbReference type="PROSITE" id="PS52019">
    <property type="entry name" value="PKS_MFAS_DH"/>
    <property type="match status" value="1"/>
</dbReference>
<reference key="1">
    <citation type="submission" date="2019-08" db="EMBL/GenBank/DDBJ databases">
        <title>Exogenous carbon and light sources induced a secondary metabolite, cristazarin, in a lichen-forming fungus Cladonia metacorallifera.</title>
        <authorList>
            <person name="Kim J.A."/>
            <person name="Kim S."/>
            <person name="Park S.-Y."/>
            <person name="Hur J.-S."/>
        </authorList>
    </citation>
    <scope>NUCLEOTIDE SEQUENCE [GENOMIC DNA]</scope>
</reference>
<reference key="2">
    <citation type="journal article" date="2023" name="PLoS ONE">
        <title>Identification of a biosynthetic gene cluster for a red pigment cristazarin produced by a lichen-forming fungus Cladonia metacorallifera.</title>
        <authorList>
            <person name="Paguirigan J.A.G."/>
            <person name="Kim J.A."/>
            <person name="Hur J.S."/>
            <person name="Kim W."/>
        </authorList>
    </citation>
    <scope>IDENTIFICATION</scope>
    <scope>INDUCTION</scope>
    <scope>DOMAIN</scope>
    <scope>FUNCTION</scope>
    <scope>PATHWAY</scope>
</reference>
<accession>A0A6H0YV38</accession>
<proteinExistence type="evidence at transcript level"/>
<evidence type="ECO:0000255" key="1"/>
<evidence type="ECO:0000255" key="2">
    <source>
        <dbReference type="PROSITE-ProRule" id="PRU00258"/>
    </source>
</evidence>
<evidence type="ECO:0000255" key="3">
    <source>
        <dbReference type="PROSITE-ProRule" id="PRU01348"/>
    </source>
</evidence>
<evidence type="ECO:0000255" key="4">
    <source>
        <dbReference type="PROSITE-ProRule" id="PRU01363"/>
    </source>
</evidence>
<evidence type="ECO:0000256" key="5">
    <source>
        <dbReference type="SAM" id="MobiDB-lite"/>
    </source>
</evidence>
<evidence type="ECO:0000269" key="6">
    <source>
    </source>
</evidence>
<evidence type="ECO:0000303" key="7">
    <source>
    </source>
</evidence>
<evidence type="ECO:0000305" key="8"/>
<evidence type="ECO:0000305" key="9">
    <source>
    </source>
</evidence>
<name>CRZ7_CLAME</name>
<organism>
    <name type="scientific">Cladonia metacorallifera</name>
    <name type="common">Lichen-forming fungus</name>
    <dbReference type="NCBI Taxonomy" id="195773"/>
    <lineage>
        <taxon>Eukaryota</taxon>
        <taxon>Fungi</taxon>
        <taxon>Dikarya</taxon>
        <taxon>Ascomycota</taxon>
        <taxon>Pezizomycotina</taxon>
        <taxon>Lecanoromycetes</taxon>
        <taxon>OSLEUM clade</taxon>
        <taxon>Lecanoromycetidae</taxon>
        <taxon>Lecanorales</taxon>
        <taxon>Lecanorineae</taxon>
        <taxon>Cladoniaceae</taxon>
        <taxon>Cladonia</taxon>
    </lineage>
</organism>
<keyword id="KW-0511">Multifunctional enzyme</keyword>
<keyword id="KW-0596">Phosphopantetheine</keyword>
<keyword id="KW-0597">Phosphoprotein</keyword>
<keyword id="KW-0677">Repeat</keyword>
<keyword id="KW-0808">Transferase</keyword>
<gene>
    <name evidence="7" type="primary">crz7</name>
    <name evidence="7" type="synonym">PKS22</name>
</gene>
<comment type="function">
    <text evidence="6 9">Non-reducing polyketide synthase; part of the gene cluster that mediates the biosynthesis of the red pigment cristazarin, a naphthazarin derivative (PubMed:37352186). The polyketide product of crz7 is likely 2-acetyl-1,3,6,8-tetrahydoxynaphthalene (AT4HN) from which a probable biosynthetic route of cristazarin can be deduced. The presence of two O-methyltransferases (crz1 and crz2), an enoyl reductase (crz5), an oxidase (crz8), and a short-chain dehydrogenase (crz9) encoded in the cristazarin biosynthetic cluster is consistent with methylation of a hydroxyl group, addition of two hydroxyl groups to the naphthalene core ring, and reduction of the acetyl side chain (Probable).</text>
</comment>
<comment type="cofactor">
    <cofactor evidence="2">
        <name>pantetheine 4'-phosphate</name>
        <dbReference type="ChEBI" id="CHEBI:47942"/>
    </cofactor>
</comment>
<comment type="pathway">
    <text evidence="9">Secondary metabolite biosynthesis.</text>
</comment>
<comment type="induction">
    <text evidence="6">Highly up-regulated in growth media containing fructose, and to a lesser extent, in a glucose-containing medium (PubMed:37352186). Expression levels remain basal in growth media containing sugar alcohols, such as ribitol and sorbitol (PubMed:37352186).</text>
</comment>
<comment type="domain">
    <text evidence="8">Multidomain protein; including a starter unit:ACP transacylase (SAT) that selects the starter unit; a ketosynthase (KS) that catalyzes repeated decarboxylative condensation to elongate the polyketide backbone; a malonyl-CoA:ACP transacylase (MAT) that selects and transfers the extender unit malonyl-CoA; a product template (PT) domain that controls the immediate cyclization regioselectivity of the reactive polyketide backbone; and two acyl-carrier protein (ACP) domains that serve as the tethers of the growing and completed polyketide via their phosphopantetheinyl arm.</text>
</comment>